<gene>
    <name evidence="1" type="primary">glyA</name>
    <name type="ordered locus">Dalk_3310</name>
</gene>
<keyword id="KW-0028">Amino-acid biosynthesis</keyword>
<keyword id="KW-0963">Cytoplasm</keyword>
<keyword id="KW-0554">One-carbon metabolism</keyword>
<keyword id="KW-0663">Pyridoxal phosphate</keyword>
<keyword id="KW-1185">Reference proteome</keyword>
<keyword id="KW-0808">Transferase</keyword>
<comment type="function">
    <text evidence="1">Catalyzes the reversible interconversion of serine and glycine with tetrahydrofolate (THF) serving as the one-carbon carrier. This reaction serves as the major source of one-carbon groups required for the biosynthesis of purines, thymidylate, methionine, and other important biomolecules. Also exhibits THF-independent aldolase activity toward beta-hydroxyamino acids, producing glycine and aldehydes, via a retro-aldol mechanism.</text>
</comment>
<comment type="catalytic activity">
    <reaction evidence="1">
        <text>(6R)-5,10-methylene-5,6,7,8-tetrahydrofolate + glycine + H2O = (6S)-5,6,7,8-tetrahydrofolate + L-serine</text>
        <dbReference type="Rhea" id="RHEA:15481"/>
        <dbReference type="ChEBI" id="CHEBI:15377"/>
        <dbReference type="ChEBI" id="CHEBI:15636"/>
        <dbReference type="ChEBI" id="CHEBI:33384"/>
        <dbReference type="ChEBI" id="CHEBI:57305"/>
        <dbReference type="ChEBI" id="CHEBI:57453"/>
        <dbReference type="EC" id="2.1.2.1"/>
    </reaction>
</comment>
<comment type="cofactor">
    <cofactor evidence="1">
        <name>pyridoxal 5'-phosphate</name>
        <dbReference type="ChEBI" id="CHEBI:597326"/>
    </cofactor>
</comment>
<comment type="pathway">
    <text evidence="1">One-carbon metabolism; tetrahydrofolate interconversion.</text>
</comment>
<comment type="pathway">
    <text evidence="1">Amino-acid biosynthesis; glycine biosynthesis; glycine from L-serine: step 1/1.</text>
</comment>
<comment type="subunit">
    <text evidence="1">Homodimer.</text>
</comment>
<comment type="subcellular location">
    <subcellularLocation>
        <location evidence="1">Cytoplasm</location>
    </subcellularLocation>
</comment>
<comment type="similarity">
    <text evidence="1">Belongs to the SHMT family.</text>
</comment>
<feature type="chain" id="PRO_0000369917" description="Serine hydroxymethyltransferase">
    <location>
        <begin position="1"/>
        <end position="413"/>
    </location>
</feature>
<feature type="binding site" evidence="1">
    <location>
        <position position="119"/>
    </location>
    <ligand>
        <name>(6S)-5,6,7,8-tetrahydrofolate</name>
        <dbReference type="ChEBI" id="CHEBI:57453"/>
    </ligand>
</feature>
<feature type="binding site" evidence="1">
    <location>
        <begin position="123"/>
        <end position="125"/>
    </location>
    <ligand>
        <name>(6S)-5,6,7,8-tetrahydrofolate</name>
        <dbReference type="ChEBI" id="CHEBI:57453"/>
    </ligand>
</feature>
<feature type="site" description="Plays an important role in substrate specificity" evidence="1">
    <location>
        <position position="227"/>
    </location>
</feature>
<feature type="modified residue" description="N6-(pyridoxal phosphate)lysine" evidence="1">
    <location>
        <position position="228"/>
    </location>
</feature>
<name>GLYA_DESAL</name>
<reference key="1">
    <citation type="journal article" date="2012" name="Environ. Microbiol.">
        <title>The genome sequence of Desulfatibacillum alkenivorans AK-01: a blueprint for anaerobic alkane oxidation.</title>
        <authorList>
            <person name="Callaghan A.V."/>
            <person name="Morris B.E."/>
            <person name="Pereira I.A."/>
            <person name="McInerney M.J."/>
            <person name="Austin R.N."/>
            <person name="Groves J.T."/>
            <person name="Kukor J.J."/>
            <person name="Suflita J.M."/>
            <person name="Young L.Y."/>
            <person name="Zylstra G.J."/>
            <person name="Wawrik B."/>
        </authorList>
    </citation>
    <scope>NUCLEOTIDE SEQUENCE [LARGE SCALE GENOMIC DNA]</scope>
    <source>
        <strain>AK-01</strain>
    </source>
</reference>
<accession>B8FJ72</accession>
<protein>
    <recommendedName>
        <fullName evidence="1">Serine hydroxymethyltransferase</fullName>
        <shortName evidence="1">SHMT</shortName>
        <shortName evidence="1">Serine methylase</shortName>
        <ecNumber evidence="1">2.1.2.1</ecNumber>
    </recommendedName>
</protein>
<evidence type="ECO:0000255" key="1">
    <source>
        <dbReference type="HAMAP-Rule" id="MF_00051"/>
    </source>
</evidence>
<organism>
    <name type="scientific">Desulfatibacillum aliphaticivorans</name>
    <dbReference type="NCBI Taxonomy" id="218208"/>
    <lineage>
        <taxon>Bacteria</taxon>
        <taxon>Pseudomonadati</taxon>
        <taxon>Thermodesulfobacteriota</taxon>
        <taxon>Desulfobacteria</taxon>
        <taxon>Desulfobacterales</taxon>
        <taxon>Desulfatibacillaceae</taxon>
        <taxon>Desulfatibacillum</taxon>
    </lineage>
</organism>
<proteinExistence type="inferred from homology"/>
<dbReference type="EC" id="2.1.2.1" evidence="1"/>
<dbReference type="EMBL" id="CP001322">
    <property type="protein sequence ID" value="ACL04999.1"/>
    <property type="molecule type" value="Genomic_DNA"/>
</dbReference>
<dbReference type="RefSeq" id="WP_015948058.1">
    <property type="nucleotide sequence ID" value="NC_011768.1"/>
</dbReference>
<dbReference type="SMR" id="B8FJ72"/>
<dbReference type="KEGG" id="dal:Dalk_3310"/>
<dbReference type="eggNOG" id="COG0112">
    <property type="taxonomic scope" value="Bacteria"/>
</dbReference>
<dbReference type="HOGENOM" id="CLU_022477_2_1_7"/>
<dbReference type="UniPathway" id="UPA00193"/>
<dbReference type="UniPathway" id="UPA00288">
    <property type="reaction ID" value="UER01023"/>
</dbReference>
<dbReference type="Proteomes" id="UP000000739">
    <property type="component" value="Chromosome"/>
</dbReference>
<dbReference type="GO" id="GO:0005829">
    <property type="term" value="C:cytosol"/>
    <property type="evidence" value="ECO:0007669"/>
    <property type="project" value="TreeGrafter"/>
</dbReference>
<dbReference type="GO" id="GO:0004372">
    <property type="term" value="F:glycine hydroxymethyltransferase activity"/>
    <property type="evidence" value="ECO:0007669"/>
    <property type="project" value="UniProtKB-UniRule"/>
</dbReference>
<dbReference type="GO" id="GO:0030170">
    <property type="term" value="F:pyridoxal phosphate binding"/>
    <property type="evidence" value="ECO:0007669"/>
    <property type="project" value="UniProtKB-UniRule"/>
</dbReference>
<dbReference type="GO" id="GO:0019264">
    <property type="term" value="P:glycine biosynthetic process from serine"/>
    <property type="evidence" value="ECO:0007669"/>
    <property type="project" value="UniProtKB-UniRule"/>
</dbReference>
<dbReference type="GO" id="GO:0035999">
    <property type="term" value="P:tetrahydrofolate interconversion"/>
    <property type="evidence" value="ECO:0007669"/>
    <property type="project" value="UniProtKB-UniRule"/>
</dbReference>
<dbReference type="CDD" id="cd00378">
    <property type="entry name" value="SHMT"/>
    <property type="match status" value="1"/>
</dbReference>
<dbReference type="FunFam" id="3.40.640.10:FF:000001">
    <property type="entry name" value="Serine hydroxymethyltransferase"/>
    <property type="match status" value="1"/>
</dbReference>
<dbReference type="FunFam" id="3.90.1150.10:FF:000003">
    <property type="entry name" value="Serine hydroxymethyltransferase"/>
    <property type="match status" value="1"/>
</dbReference>
<dbReference type="Gene3D" id="3.90.1150.10">
    <property type="entry name" value="Aspartate Aminotransferase, domain 1"/>
    <property type="match status" value="1"/>
</dbReference>
<dbReference type="Gene3D" id="3.40.640.10">
    <property type="entry name" value="Type I PLP-dependent aspartate aminotransferase-like (Major domain)"/>
    <property type="match status" value="1"/>
</dbReference>
<dbReference type="HAMAP" id="MF_00051">
    <property type="entry name" value="SHMT"/>
    <property type="match status" value="1"/>
</dbReference>
<dbReference type="InterPro" id="IPR015424">
    <property type="entry name" value="PyrdxlP-dep_Trfase"/>
</dbReference>
<dbReference type="InterPro" id="IPR015421">
    <property type="entry name" value="PyrdxlP-dep_Trfase_major"/>
</dbReference>
<dbReference type="InterPro" id="IPR015422">
    <property type="entry name" value="PyrdxlP-dep_Trfase_small"/>
</dbReference>
<dbReference type="InterPro" id="IPR001085">
    <property type="entry name" value="Ser_HO-MeTrfase"/>
</dbReference>
<dbReference type="InterPro" id="IPR049943">
    <property type="entry name" value="Ser_HO-MeTrfase-like"/>
</dbReference>
<dbReference type="InterPro" id="IPR019798">
    <property type="entry name" value="Ser_HO-MeTrfase_PLP_BS"/>
</dbReference>
<dbReference type="InterPro" id="IPR039429">
    <property type="entry name" value="SHMT-like_dom"/>
</dbReference>
<dbReference type="NCBIfam" id="NF000586">
    <property type="entry name" value="PRK00011.1"/>
    <property type="match status" value="1"/>
</dbReference>
<dbReference type="PANTHER" id="PTHR11680">
    <property type="entry name" value="SERINE HYDROXYMETHYLTRANSFERASE"/>
    <property type="match status" value="1"/>
</dbReference>
<dbReference type="PANTHER" id="PTHR11680:SF35">
    <property type="entry name" value="SERINE HYDROXYMETHYLTRANSFERASE 1"/>
    <property type="match status" value="1"/>
</dbReference>
<dbReference type="Pfam" id="PF00464">
    <property type="entry name" value="SHMT"/>
    <property type="match status" value="1"/>
</dbReference>
<dbReference type="PIRSF" id="PIRSF000412">
    <property type="entry name" value="SHMT"/>
    <property type="match status" value="1"/>
</dbReference>
<dbReference type="SUPFAM" id="SSF53383">
    <property type="entry name" value="PLP-dependent transferases"/>
    <property type="match status" value="1"/>
</dbReference>
<dbReference type="PROSITE" id="PS00096">
    <property type="entry name" value="SHMT"/>
    <property type="match status" value="1"/>
</dbReference>
<sequence length="413" mass="44657">MDLETIRKVDPEAAKAIEQELDRQQFTLELIASENIASPAVMAAQGSVMTNKYAEGYPGHRYYGGCEFVDVAENLARDRAKELFQADYANVQPHSGSQANMGVYFALLEPGDTVLGMDLSHGGHLTHGSPVSFSGRIFNFIHYGVKEKTGTIDYDQLRSLAKEHKPKLIVAGASAYPRIIDFPELEKIARETGAYLMVDMAHIAGLVAAGEHPSPLPYADVVTTTTHKTLRGPRGGMILSNKGFGKKLSSQIFPGIQGGPLMHVIAAKAVAFKEALTPEFKAYQQQVVKNAACLAKRLMDNGVDLVSGGTDNHMMLLNLSNLDITGKEAEGLVEQAGITVNKNTIPFDKNGPAVTSGIRVGTPTITSRGMKEPEMELIADCLANVLKNPQDQALIESTRAKVKDLCQSFPIYA</sequence>